<proteinExistence type="evidence at transcript level"/>
<reference key="1">
    <citation type="submission" date="2006-12" db="EMBL/GenBank/DDBJ databases">
        <authorList>
            <consortium name="NIH - Xenopus Gene Collection (XGC) project"/>
        </authorList>
    </citation>
    <scope>NUCLEOTIDE SEQUENCE [LARGE SCALE MRNA]</scope>
    <source>
        <tissue>Tail</tissue>
    </source>
</reference>
<dbReference type="EMBL" id="BC129691">
    <property type="protein sequence ID" value="AAI29692.1"/>
    <property type="molecule type" value="mRNA"/>
</dbReference>
<dbReference type="RefSeq" id="NP_001091178.1">
    <property type="nucleotide sequence ID" value="NM_001097709.1"/>
</dbReference>
<dbReference type="RefSeq" id="XP_018111796.1">
    <property type="nucleotide sequence ID" value="XM_018256307.1"/>
</dbReference>
<dbReference type="DNASU" id="100036939"/>
<dbReference type="GeneID" id="100036939"/>
<dbReference type="KEGG" id="xla:100036939"/>
<dbReference type="AGR" id="Xenbase:XB-GENE-991969"/>
<dbReference type="CTD" id="100036939"/>
<dbReference type="Xenbase" id="XB-GENE-991969">
    <property type="gene designation" value="zfpl1.L"/>
</dbReference>
<dbReference type="OMA" id="HDHDYNP"/>
<dbReference type="OrthoDB" id="1916590at2759"/>
<dbReference type="Proteomes" id="UP000186698">
    <property type="component" value="Chromosome 4L"/>
</dbReference>
<dbReference type="Bgee" id="100036939">
    <property type="expression patterns" value="Expressed in testis and 19 other cell types or tissues"/>
</dbReference>
<dbReference type="GO" id="GO:0005794">
    <property type="term" value="C:Golgi apparatus"/>
    <property type="evidence" value="ECO:0000318"/>
    <property type="project" value="GO_Central"/>
</dbReference>
<dbReference type="GO" id="GO:0016020">
    <property type="term" value="C:membrane"/>
    <property type="evidence" value="ECO:0007669"/>
    <property type="project" value="UniProtKB-KW"/>
</dbReference>
<dbReference type="GO" id="GO:0008270">
    <property type="term" value="F:zinc ion binding"/>
    <property type="evidence" value="ECO:0007669"/>
    <property type="project" value="UniProtKB-KW"/>
</dbReference>
<dbReference type="GO" id="GO:0016192">
    <property type="term" value="P:vesicle-mediated transport"/>
    <property type="evidence" value="ECO:0007669"/>
    <property type="project" value="UniProtKB-KW"/>
</dbReference>
<dbReference type="CDD" id="cd16487">
    <property type="entry name" value="mRING-H2-C3DHC3_ZFPL1"/>
    <property type="match status" value="1"/>
</dbReference>
<dbReference type="Gene3D" id="3.30.40.10">
    <property type="entry name" value="Zinc/RING finger domain, C3HC4 (zinc finger)"/>
    <property type="match status" value="1"/>
</dbReference>
<dbReference type="InterPro" id="IPR039043">
    <property type="entry name" value="ZFPL1"/>
</dbReference>
<dbReference type="InterPro" id="IPR001841">
    <property type="entry name" value="Znf_RING"/>
</dbReference>
<dbReference type="InterPro" id="IPR013083">
    <property type="entry name" value="Znf_RING/FYVE/PHD"/>
</dbReference>
<dbReference type="PANTHER" id="PTHR12981">
    <property type="entry name" value="ZINC FINGER PROTEIN-LIKE 1"/>
    <property type="match status" value="1"/>
</dbReference>
<dbReference type="PANTHER" id="PTHR12981:SF0">
    <property type="entry name" value="ZINC FINGER PROTEIN-LIKE 1"/>
    <property type="match status" value="1"/>
</dbReference>
<dbReference type="SUPFAM" id="SSF57850">
    <property type="entry name" value="RING/U-box"/>
    <property type="match status" value="1"/>
</dbReference>
<dbReference type="PROSITE" id="PS50089">
    <property type="entry name" value="ZF_RING_2"/>
    <property type="match status" value="1"/>
</dbReference>
<sequence>MGLCKCPKRKVTNLFCFEHRVNVCEHCLVANHAKCIVQSYLQWLQDSDYNPNCRLCNTLLSSKETARLVCYDLFHWSCLNDLATQQPPNTAPAGYRCPSCQGPVFPPNNLVSPVAATLREKLSTVNWARAGLGLPLIEVAEPVDDTMSHDETDYRDWSVVNSSSDNLSETPETTSQTGYTYNSVAPGAVQQSLNGNMSQDHAVTIRDTGSESVPFNAASSPRKVYDTRENARGQDAVIDFDDDKYRRRPTLNWLARILRNRSGSKSRPASSMQRFLVILIIGVLGFLTLILLMSKLGRASADNDPNLDPLLNPHIHVGKE</sequence>
<protein>
    <recommendedName>
        <fullName>Zinc finger protein-like 1</fullName>
    </recommendedName>
</protein>
<comment type="function">
    <text evidence="1">Required for cis-Golgi integrity and efficient ER to Golgi transport.</text>
</comment>
<comment type="subcellular location">
    <subcellularLocation>
        <location evidence="1">Golgi apparatus</location>
        <location evidence="1">cis-Golgi network membrane</location>
        <topology evidence="1">Single-pass membrane protein</topology>
    </subcellularLocation>
</comment>
<comment type="similarity">
    <text evidence="4">Belongs to the ZFPL1 family.</text>
</comment>
<organism>
    <name type="scientific">Xenopus laevis</name>
    <name type="common">African clawed frog</name>
    <dbReference type="NCBI Taxonomy" id="8355"/>
    <lineage>
        <taxon>Eukaryota</taxon>
        <taxon>Metazoa</taxon>
        <taxon>Chordata</taxon>
        <taxon>Craniata</taxon>
        <taxon>Vertebrata</taxon>
        <taxon>Euteleostomi</taxon>
        <taxon>Amphibia</taxon>
        <taxon>Batrachia</taxon>
        <taxon>Anura</taxon>
        <taxon>Pipoidea</taxon>
        <taxon>Pipidae</taxon>
        <taxon>Xenopodinae</taxon>
        <taxon>Xenopus</taxon>
        <taxon>Xenopus</taxon>
    </lineage>
</organism>
<keyword id="KW-0931">ER-Golgi transport</keyword>
<keyword id="KW-0333">Golgi apparatus</keyword>
<keyword id="KW-0472">Membrane</keyword>
<keyword id="KW-0479">Metal-binding</keyword>
<keyword id="KW-1185">Reference proteome</keyword>
<keyword id="KW-0812">Transmembrane</keyword>
<keyword id="KW-1133">Transmembrane helix</keyword>
<keyword id="KW-0813">Transport</keyword>
<keyword id="KW-0862">Zinc</keyword>
<keyword id="KW-0863">Zinc-finger</keyword>
<name>ZFPL1_XENLA</name>
<accession>A1L2S8</accession>
<feature type="chain" id="PRO_0000355173" description="Zinc finger protein-like 1">
    <location>
        <begin position="1"/>
        <end position="320"/>
    </location>
</feature>
<feature type="topological domain" description="Cytoplasmic" evidence="2">
    <location>
        <begin position="1"/>
        <end position="274"/>
    </location>
</feature>
<feature type="transmembrane region" description="Helical" evidence="2">
    <location>
        <begin position="275"/>
        <end position="295"/>
    </location>
</feature>
<feature type="topological domain" description="Lumenal" evidence="2">
    <location>
        <begin position="296"/>
        <end position="320"/>
    </location>
</feature>
<feature type="zinc finger region" description="B box-type; degenerate">
    <location>
        <begin position="1"/>
        <end position="43"/>
    </location>
</feature>
<feature type="zinc finger region" description="RING-type; degenerate" evidence="3">
    <location>
        <begin position="53"/>
        <end position="101"/>
    </location>
</feature>
<gene>
    <name type="primary">zfpl1</name>
</gene>
<evidence type="ECO:0000250" key="1"/>
<evidence type="ECO:0000255" key="2"/>
<evidence type="ECO:0000255" key="3">
    <source>
        <dbReference type="PROSITE-ProRule" id="PRU00175"/>
    </source>
</evidence>
<evidence type="ECO:0000305" key="4"/>